<name>Y1835_STRP4</name>
<evidence type="ECO:0000255" key="1">
    <source>
        <dbReference type="HAMAP-Rule" id="MF_00918"/>
    </source>
</evidence>
<sequence>MGRKWANIVAKKTAKDGANSKVYAKFGVEIYVAAKKGDPDPESNSALKFVIDRAKQAQVPKHIIDKAIDKAKGNTDETFTEGRYEGFGPNGSMLIVDTLTSNVNRTAANVRAAFGKNGGNMGASGSVSYLFDNKGVIVFGGEDADAVFEQLLEADVDVDDVEAQEGTITVYTAPTDLHKAIVALRESGIEEFQVTELEMIPQSEVELSGEDLETFEKLYSVLEDDEDVQKIYTNVDGF</sequence>
<organism>
    <name type="scientific">Streptococcus pneumoniae serotype 19F (strain G54)</name>
    <dbReference type="NCBI Taxonomy" id="512566"/>
    <lineage>
        <taxon>Bacteria</taxon>
        <taxon>Bacillati</taxon>
        <taxon>Bacillota</taxon>
        <taxon>Bacilli</taxon>
        <taxon>Lactobacillales</taxon>
        <taxon>Streptococcaceae</taxon>
        <taxon>Streptococcus</taxon>
    </lineage>
</organism>
<feature type="chain" id="PRO_1000132240" description="Probable transcriptional regulatory protein SPG_1835">
    <location>
        <begin position="1"/>
        <end position="238"/>
    </location>
</feature>
<proteinExistence type="inferred from homology"/>
<comment type="subcellular location">
    <subcellularLocation>
        <location evidence="1">Cytoplasm</location>
    </subcellularLocation>
</comment>
<comment type="similarity">
    <text evidence="1">Belongs to the TACO1 family. YeeN subfamily.</text>
</comment>
<gene>
    <name type="ordered locus">SPG_1835</name>
</gene>
<reference key="1">
    <citation type="journal article" date="2001" name="Microb. Drug Resist.">
        <title>Annotated draft genomic sequence from a Streptococcus pneumoniae type 19F clinical isolate.</title>
        <authorList>
            <person name="Dopazo J."/>
            <person name="Mendoza A."/>
            <person name="Herrero J."/>
            <person name="Caldara F."/>
            <person name="Humbert Y."/>
            <person name="Friedli L."/>
            <person name="Guerrier M."/>
            <person name="Grand-Schenk E."/>
            <person name="Gandin C."/>
            <person name="de Francesco M."/>
            <person name="Polissi A."/>
            <person name="Buell G."/>
            <person name="Feger G."/>
            <person name="Garcia E."/>
            <person name="Peitsch M."/>
            <person name="Garcia-Bustos J.F."/>
        </authorList>
    </citation>
    <scope>NUCLEOTIDE SEQUENCE [LARGE SCALE GENOMIC DNA]</scope>
    <source>
        <strain>G54</strain>
    </source>
</reference>
<reference key="2">
    <citation type="submission" date="2008-03" db="EMBL/GenBank/DDBJ databases">
        <title>Pneumococcal beta glucoside metabolism investigated by whole genome comparison.</title>
        <authorList>
            <person name="Mulas L."/>
            <person name="Trappetti C."/>
            <person name="Hakenbeck R."/>
            <person name="Iannelli F."/>
            <person name="Pozzi G."/>
            <person name="Davidsen T.M."/>
            <person name="Tettelin H."/>
            <person name="Oggioni M."/>
        </authorList>
    </citation>
    <scope>NUCLEOTIDE SEQUENCE [LARGE SCALE GENOMIC DNA]</scope>
    <source>
        <strain>G54</strain>
    </source>
</reference>
<keyword id="KW-0963">Cytoplasm</keyword>
<keyword id="KW-0238">DNA-binding</keyword>
<keyword id="KW-0804">Transcription</keyword>
<keyword id="KW-0805">Transcription regulation</keyword>
<dbReference type="EMBL" id="CP001015">
    <property type="protein sequence ID" value="ACF56220.1"/>
    <property type="molecule type" value="Genomic_DNA"/>
</dbReference>
<dbReference type="SMR" id="B5E2C6"/>
<dbReference type="KEGG" id="spx:SPG_1835"/>
<dbReference type="HOGENOM" id="CLU_062974_2_0_9"/>
<dbReference type="GO" id="GO:0005829">
    <property type="term" value="C:cytosol"/>
    <property type="evidence" value="ECO:0007669"/>
    <property type="project" value="TreeGrafter"/>
</dbReference>
<dbReference type="GO" id="GO:0003677">
    <property type="term" value="F:DNA binding"/>
    <property type="evidence" value="ECO:0007669"/>
    <property type="project" value="UniProtKB-UniRule"/>
</dbReference>
<dbReference type="GO" id="GO:0006355">
    <property type="term" value="P:regulation of DNA-templated transcription"/>
    <property type="evidence" value="ECO:0007669"/>
    <property type="project" value="UniProtKB-UniRule"/>
</dbReference>
<dbReference type="FunFam" id="1.10.10.200:FF:000003">
    <property type="entry name" value="Probable transcriptional regulatory protein YeeN"/>
    <property type="match status" value="1"/>
</dbReference>
<dbReference type="FunFam" id="3.30.70.980:FF:000004">
    <property type="entry name" value="Probable transcriptional regulatory protein YeeN"/>
    <property type="match status" value="1"/>
</dbReference>
<dbReference type="Gene3D" id="1.10.10.200">
    <property type="match status" value="1"/>
</dbReference>
<dbReference type="Gene3D" id="3.30.70.980">
    <property type="match status" value="2"/>
</dbReference>
<dbReference type="HAMAP" id="MF_00693">
    <property type="entry name" value="Transcrip_reg_TACO1"/>
    <property type="match status" value="1"/>
</dbReference>
<dbReference type="HAMAP" id="MF_00918">
    <property type="entry name" value="Transcrip_reg_TACO1_YeeN"/>
    <property type="match status" value="1"/>
</dbReference>
<dbReference type="InterPro" id="IPR017856">
    <property type="entry name" value="Integrase-like_N"/>
</dbReference>
<dbReference type="InterPro" id="IPR048300">
    <property type="entry name" value="TACO1_YebC-like_2nd/3rd_dom"/>
</dbReference>
<dbReference type="InterPro" id="IPR049083">
    <property type="entry name" value="TACO1_YebC_N"/>
</dbReference>
<dbReference type="InterPro" id="IPR002876">
    <property type="entry name" value="Transcrip_reg_TACO1-like"/>
</dbReference>
<dbReference type="InterPro" id="IPR026564">
    <property type="entry name" value="Transcrip_reg_TACO1-like_dom3"/>
</dbReference>
<dbReference type="InterPro" id="IPR026562">
    <property type="entry name" value="Transcrip_reg_TACO1_YeeN"/>
</dbReference>
<dbReference type="InterPro" id="IPR029072">
    <property type="entry name" value="YebC-like"/>
</dbReference>
<dbReference type="NCBIfam" id="NF001030">
    <property type="entry name" value="PRK00110.1"/>
    <property type="match status" value="1"/>
</dbReference>
<dbReference type="NCBIfam" id="NF009044">
    <property type="entry name" value="PRK12378.1"/>
    <property type="match status" value="1"/>
</dbReference>
<dbReference type="NCBIfam" id="TIGR01033">
    <property type="entry name" value="YebC/PmpR family DNA-binding transcriptional regulator"/>
    <property type="match status" value="1"/>
</dbReference>
<dbReference type="PANTHER" id="PTHR12532">
    <property type="entry name" value="TRANSLATIONAL ACTIVATOR OF CYTOCHROME C OXIDASE 1"/>
    <property type="match status" value="1"/>
</dbReference>
<dbReference type="PANTHER" id="PTHR12532:SF0">
    <property type="entry name" value="TRANSLATIONAL ACTIVATOR OF CYTOCHROME C OXIDASE 1"/>
    <property type="match status" value="1"/>
</dbReference>
<dbReference type="Pfam" id="PF20772">
    <property type="entry name" value="TACO1_YebC_N"/>
    <property type="match status" value="1"/>
</dbReference>
<dbReference type="Pfam" id="PF01709">
    <property type="entry name" value="Transcrip_reg"/>
    <property type="match status" value="1"/>
</dbReference>
<dbReference type="SUPFAM" id="SSF75625">
    <property type="entry name" value="YebC-like"/>
    <property type="match status" value="1"/>
</dbReference>
<accession>B5E2C6</accession>
<protein>
    <recommendedName>
        <fullName evidence="1">Probable transcriptional regulatory protein SPG_1835</fullName>
    </recommendedName>
</protein>